<accession>Q9FNI8</accession>
<reference key="1">
    <citation type="journal article" date="1997" name="DNA Res.">
        <title>Structural analysis of Arabidopsis thaliana chromosome 5. II. Sequence features of the regions of 1,044,062 bp covered by thirteen physically assigned P1 clones.</title>
        <authorList>
            <person name="Kotani H."/>
            <person name="Nakamura Y."/>
            <person name="Sato S."/>
            <person name="Kaneko T."/>
            <person name="Asamizu E."/>
            <person name="Miyajima N."/>
            <person name="Tabata S."/>
        </authorList>
    </citation>
    <scope>NUCLEOTIDE SEQUENCE [LARGE SCALE GENOMIC DNA]</scope>
    <source>
        <strain>cv. Columbia</strain>
    </source>
</reference>
<reference key="2">
    <citation type="journal article" date="2017" name="Plant J.">
        <title>Araport11: a complete reannotation of the Arabidopsis thaliana reference genome.</title>
        <authorList>
            <person name="Cheng C.Y."/>
            <person name="Krishnakumar V."/>
            <person name="Chan A.P."/>
            <person name="Thibaud-Nissen F."/>
            <person name="Schobel S."/>
            <person name="Town C.D."/>
        </authorList>
    </citation>
    <scope>GENOME REANNOTATION</scope>
    <source>
        <strain>cv. Columbia</strain>
    </source>
</reference>
<dbReference type="EMBL" id="AB006699">
    <property type="protein sequence ID" value="BAB11679.1"/>
    <property type="status" value="ALT_INIT"/>
    <property type="molecule type" value="Genomic_DNA"/>
</dbReference>
<dbReference type="EMBL" id="CP002688">
    <property type="protein sequence ID" value="AED93068.1"/>
    <property type="molecule type" value="Genomic_DNA"/>
</dbReference>
<dbReference type="EMBL" id="CP002688">
    <property type="protein sequence ID" value="ANM69443.1"/>
    <property type="molecule type" value="Genomic_DNA"/>
</dbReference>
<dbReference type="RefSeq" id="NP_001331119.1">
    <property type="nucleotide sequence ID" value="NM_001343758.1"/>
</dbReference>
<dbReference type="RefSeq" id="NP_197665.2">
    <property type="nucleotide sequence ID" value="NM_122179.3"/>
</dbReference>
<dbReference type="FunCoup" id="Q9FNI8">
    <property type="interactions" value="276"/>
</dbReference>
<dbReference type="PaxDb" id="3702-AT5G22730.1"/>
<dbReference type="ProteomicsDB" id="230059"/>
<dbReference type="EnsemblPlants" id="AT5G22730.1">
    <property type="protein sequence ID" value="AT5G22730.1"/>
    <property type="gene ID" value="AT5G22730"/>
</dbReference>
<dbReference type="EnsemblPlants" id="AT5G22730.3">
    <property type="protein sequence ID" value="AT5G22730.3"/>
    <property type="gene ID" value="AT5G22730"/>
</dbReference>
<dbReference type="GeneID" id="832336"/>
<dbReference type="Gramene" id="AT5G22730.1">
    <property type="protein sequence ID" value="AT5G22730.1"/>
    <property type="gene ID" value="AT5G22730"/>
</dbReference>
<dbReference type="Gramene" id="AT5G22730.3">
    <property type="protein sequence ID" value="AT5G22730.3"/>
    <property type="gene ID" value="AT5G22730"/>
</dbReference>
<dbReference type="KEGG" id="ath:AT5G22730"/>
<dbReference type="Araport" id="AT5G22730"/>
<dbReference type="TAIR" id="AT5G22730"/>
<dbReference type="eggNOG" id="ENOG502RRIF">
    <property type="taxonomic scope" value="Eukaryota"/>
</dbReference>
<dbReference type="HOGENOM" id="CLU_010721_1_3_1"/>
<dbReference type="InParanoid" id="Q9FNI8"/>
<dbReference type="OMA" id="HLDIECT"/>
<dbReference type="PhylomeDB" id="Q9FNI8"/>
<dbReference type="PRO" id="PR:Q9FNI8"/>
<dbReference type="Proteomes" id="UP000006548">
    <property type="component" value="Chromosome 5"/>
</dbReference>
<dbReference type="ExpressionAtlas" id="Q9FNI8">
    <property type="expression patterns" value="baseline and differential"/>
</dbReference>
<dbReference type="CDD" id="cd22160">
    <property type="entry name" value="F-box_AtFBL13-like"/>
    <property type="match status" value="1"/>
</dbReference>
<dbReference type="Gene3D" id="1.20.1280.50">
    <property type="match status" value="1"/>
</dbReference>
<dbReference type="Gene3D" id="3.80.10.10">
    <property type="entry name" value="Ribonuclease Inhibitor"/>
    <property type="match status" value="1"/>
</dbReference>
<dbReference type="InterPro" id="IPR036047">
    <property type="entry name" value="F-box-like_dom_sf"/>
</dbReference>
<dbReference type="InterPro" id="IPR053781">
    <property type="entry name" value="F-box_AtFBL13-like"/>
</dbReference>
<dbReference type="InterPro" id="IPR001810">
    <property type="entry name" value="F-box_dom"/>
</dbReference>
<dbReference type="InterPro" id="IPR006566">
    <property type="entry name" value="FBD"/>
</dbReference>
<dbReference type="InterPro" id="IPR050232">
    <property type="entry name" value="FBL13/AtMIF1-like"/>
</dbReference>
<dbReference type="InterPro" id="IPR032675">
    <property type="entry name" value="LRR_dom_sf"/>
</dbReference>
<dbReference type="InterPro" id="IPR055411">
    <property type="entry name" value="LRR_FXL15/At3g58940/PEG3-like"/>
</dbReference>
<dbReference type="PANTHER" id="PTHR31900">
    <property type="entry name" value="F-BOX/RNI SUPERFAMILY PROTEIN-RELATED"/>
    <property type="match status" value="1"/>
</dbReference>
<dbReference type="PANTHER" id="PTHR31900:SF25">
    <property type="entry name" value="FBD DOMAIN-CONTAINING PROTEIN"/>
    <property type="match status" value="1"/>
</dbReference>
<dbReference type="Pfam" id="PF00646">
    <property type="entry name" value="F-box"/>
    <property type="match status" value="1"/>
</dbReference>
<dbReference type="Pfam" id="PF08387">
    <property type="entry name" value="FBD"/>
    <property type="match status" value="1"/>
</dbReference>
<dbReference type="Pfam" id="PF24758">
    <property type="entry name" value="LRR_At5g56370"/>
    <property type="match status" value="1"/>
</dbReference>
<dbReference type="SMART" id="SM00579">
    <property type="entry name" value="FBD"/>
    <property type="match status" value="1"/>
</dbReference>
<dbReference type="SMART" id="SM00256">
    <property type="entry name" value="FBOX"/>
    <property type="match status" value="1"/>
</dbReference>
<dbReference type="SUPFAM" id="SSF81383">
    <property type="entry name" value="F-box domain"/>
    <property type="match status" value="1"/>
</dbReference>
<dbReference type="SUPFAM" id="SSF52047">
    <property type="entry name" value="RNI-like"/>
    <property type="match status" value="1"/>
</dbReference>
<dbReference type="PROSITE" id="PS50181">
    <property type="entry name" value="FBOX"/>
    <property type="match status" value="1"/>
</dbReference>
<comment type="sequence caution" evidence="2">
    <conflict type="erroneous initiation">
        <sequence resource="EMBL-CDS" id="BAB11679"/>
    </conflict>
</comment>
<proteinExistence type="evidence at transcript level"/>
<organism>
    <name type="scientific">Arabidopsis thaliana</name>
    <name type="common">Mouse-ear cress</name>
    <dbReference type="NCBI Taxonomy" id="3702"/>
    <lineage>
        <taxon>Eukaryota</taxon>
        <taxon>Viridiplantae</taxon>
        <taxon>Streptophyta</taxon>
        <taxon>Embryophyta</taxon>
        <taxon>Tracheophyta</taxon>
        <taxon>Spermatophyta</taxon>
        <taxon>Magnoliopsida</taxon>
        <taxon>eudicotyledons</taxon>
        <taxon>Gunneridae</taxon>
        <taxon>Pentapetalae</taxon>
        <taxon>rosids</taxon>
        <taxon>malvids</taxon>
        <taxon>Brassicales</taxon>
        <taxon>Brassicaceae</taxon>
        <taxon>Camelineae</taxon>
        <taxon>Arabidopsis</taxon>
    </lineage>
</organism>
<keyword id="KW-1185">Reference proteome</keyword>
<protein>
    <recommendedName>
        <fullName>FBD-associated F-box protein At5g22730</fullName>
    </recommendedName>
</protein>
<evidence type="ECO:0000255" key="1">
    <source>
        <dbReference type="PROSITE-ProRule" id="PRU00080"/>
    </source>
</evidence>
<evidence type="ECO:0000305" key="2"/>
<gene>
    <name type="ordered locus">At5g22730</name>
    <name type="ORF">MDJ22.15</name>
</gene>
<name>FBD32_ARATH</name>
<feature type="chain" id="PRO_0000382467" description="FBD-associated F-box protein At5g22730">
    <location>
        <begin position="1"/>
        <end position="466"/>
    </location>
</feature>
<feature type="domain" description="F-box" evidence="1">
    <location>
        <begin position="27"/>
        <end position="80"/>
    </location>
</feature>
<feature type="domain" description="FBD">
    <location>
        <begin position="385"/>
        <end position="436"/>
    </location>
</feature>
<sequence>MLYEGYLKYMKAKYGERSQGTYFMAGEDLISKLPDSLITQILLYLPIKDIVRTSSLSSRWKSLWLLIPRLDLDSEEFQDYNAFVGFMNKFIDFSGEEKICLDKLKLSSRKTVNDLPCVTRWIDFVVRRKLKHLDVECLVNRKFLEEMPLSLYVCDTLVNLRLHRVLLGKFEAVSLPCLKTMRLEENVYANDVVLESLISSCPVLKDLIILRMFEDNVKVLRVHSLTLTSLNIDFNFGEGDDFVDGFDKKVSGVLIDAPRLKYLKFQDDLSGSKIITNSGSLAKVNVVYVFNENDCADVVDIPRRNMVRNFLTSISGVSDMKISQHFVEFLYYYKDFDPLPQFCNLSRLKAEISLYFLEILPTILESCPNLKSLVMVLEFYLQEEDEPIIFSSVPRCLVSSLESVEIKKFNGRPAKMEVARYFLENSGVLQKLVLHLRCSTHEDGFYILKDLLALPRGSSTCRIVVC</sequence>